<sequence>MRMHNKIQLLSVLNTHLVAYPTPMNLNYSWNGGSLAGMMLASQMLTGILLAMHYVGHVDYAFASVQHLMTDVPSGMILRYAHANGASLFFIVVYLHVLRGMYYGSGAQPREIVWISGVVILLVMIITAFIGYVLPWGQMSFWGATVITSLATAIPVVGKHIMYWLWGGFSVDNPTLNRFYSFHYTLPFILAGLSVFHIAALHQYGSTNPLGVNSQSSLISFGSYFGAKDLVGALFLALVFSILVFFYPDLLGHPDNLIPANPYSTPQHIVPEWYFLWVYAILRSIPNKAMGVLAIGLVFASLFAMPFIGLGGGKFRIITEWLYWTFLADVLLLTWLGGNEITPITSFVGQCCTAYLFFYLLVCQPLVGYLETQFAHGTQTN</sequence>
<comment type="function">
    <text evidence="3">Component of the ubiquinol-cytochrome c reductase complex (complex III or cytochrome b-c1 complex) that is part of the mitochondrial respiratory chain. The b-c1 complex mediates electron transfer from ubiquinol to cytochrome c. Contributes to the generation of a proton gradient across the mitochondrial membrane that is then used for ATP synthesis.</text>
</comment>
<comment type="cofactor">
    <cofactor evidence="3">
        <name>heme b</name>
        <dbReference type="ChEBI" id="CHEBI:60344"/>
    </cofactor>
    <text evidence="3">Binds 2 heme b groups non-covalently.</text>
</comment>
<comment type="subunit">
    <text evidence="1">The main subunits of complex b-c1 are: cytochrome b, cytochrome c1 and the Rieske protein.</text>
</comment>
<comment type="subcellular location">
    <subcellularLocation>
        <location evidence="3">Mitochondrion inner membrane</location>
        <topology evidence="3">Multi-pass membrane protein</topology>
    </subcellularLocation>
</comment>
<comment type="miscellaneous">
    <text evidence="1">Heme 1 (or BL or b562) is low-potential and absorbs at about 562 nm, and heme 2 (or BH or b566) is high-potential and absorbs at about 566 nm.</text>
</comment>
<comment type="similarity">
    <text evidence="4 5">Belongs to the cytochrome b family.</text>
</comment>
<comment type="caution">
    <text evidence="3">The protein contains only eight transmembrane helices, not nine as predicted by bioinformatics tools.</text>
</comment>
<protein>
    <recommendedName>
        <fullName>Cytochrome b</fullName>
    </recommendedName>
    <alternativeName>
        <fullName>Complex III subunit 3</fullName>
    </alternativeName>
    <alternativeName>
        <fullName>Complex III subunit III</fullName>
    </alternativeName>
    <alternativeName>
        <fullName>Cytochrome b-c1 complex subunit 3</fullName>
    </alternativeName>
    <alternativeName>
        <fullName>Ubiquinol-cytochrome-c reductase complex cytochrome b subunit</fullName>
    </alternativeName>
</protein>
<organism>
    <name type="scientific">Chlamydomonas reinhardtii</name>
    <name type="common">Chlamydomonas smithii</name>
    <dbReference type="NCBI Taxonomy" id="3055"/>
    <lineage>
        <taxon>Eukaryota</taxon>
        <taxon>Viridiplantae</taxon>
        <taxon>Chlorophyta</taxon>
        <taxon>core chlorophytes</taxon>
        <taxon>Chlorophyceae</taxon>
        <taxon>CS clade</taxon>
        <taxon>Chlamydomonadales</taxon>
        <taxon>Chlamydomonadaceae</taxon>
        <taxon>Chlamydomonas</taxon>
    </lineage>
</organism>
<feature type="chain" id="PRO_0000060782" description="Cytochrome b">
    <location>
        <begin position="1"/>
        <end position="381"/>
    </location>
</feature>
<feature type="transmembrane region" description="Helical" evidence="3">
    <location>
        <begin position="32"/>
        <end position="52"/>
    </location>
</feature>
<feature type="transmembrane region" description="Helical" evidence="3">
    <location>
        <begin position="76"/>
        <end position="98"/>
    </location>
</feature>
<feature type="transmembrane region" description="Helical" evidence="3">
    <location>
        <begin position="113"/>
        <end position="133"/>
    </location>
</feature>
<feature type="transmembrane region" description="Helical" evidence="3">
    <location>
        <begin position="179"/>
        <end position="199"/>
    </location>
</feature>
<feature type="transmembrane region" description="Helical" evidence="3">
    <location>
        <begin position="225"/>
        <end position="245"/>
    </location>
</feature>
<feature type="transmembrane region" description="Helical" evidence="3">
    <location>
        <begin position="289"/>
        <end position="309"/>
    </location>
</feature>
<feature type="transmembrane region" description="Helical" evidence="3">
    <location>
        <begin position="318"/>
        <end position="338"/>
    </location>
</feature>
<feature type="transmembrane region" description="Helical" evidence="3">
    <location>
        <begin position="345"/>
        <end position="365"/>
    </location>
</feature>
<feature type="binding site" description="axial binding residue" evidence="3">
    <location>
        <position position="82"/>
    </location>
    <ligand>
        <name>heme b</name>
        <dbReference type="ChEBI" id="CHEBI:60344"/>
        <label>b562</label>
    </ligand>
    <ligandPart>
        <name>Fe</name>
        <dbReference type="ChEBI" id="CHEBI:18248"/>
    </ligandPart>
</feature>
<feature type="binding site" description="axial binding residue" evidence="3">
    <location>
        <position position="96"/>
    </location>
    <ligand>
        <name>heme b</name>
        <dbReference type="ChEBI" id="CHEBI:60344"/>
        <label>b566</label>
    </ligand>
    <ligandPart>
        <name>Fe</name>
        <dbReference type="ChEBI" id="CHEBI:18248"/>
    </ligandPart>
</feature>
<feature type="binding site" description="axial binding residue" evidence="3">
    <location>
        <position position="183"/>
    </location>
    <ligand>
        <name>heme b</name>
        <dbReference type="ChEBI" id="CHEBI:60344"/>
        <label>b562</label>
    </ligand>
    <ligandPart>
        <name>Fe</name>
        <dbReference type="ChEBI" id="CHEBI:18248"/>
    </ligandPart>
</feature>
<feature type="binding site" description="axial binding residue" evidence="3">
    <location>
        <position position="197"/>
    </location>
    <ligand>
        <name>heme b</name>
        <dbReference type="ChEBI" id="CHEBI:60344"/>
        <label>b566</label>
    </ligand>
    <ligandPart>
        <name>Fe</name>
        <dbReference type="ChEBI" id="CHEBI:18248"/>
    </ligandPart>
</feature>
<feature type="binding site" evidence="2">
    <location>
        <position position="202"/>
    </location>
    <ligand>
        <name>a ubiquinone</name>
        <dbReference type="ChEBI" id="CHEBI:16389"/>
    </ligand>
</feature>
<feature type="sequence variant" description="In strain: CC-1373.">
    <original>I</original>
    <variation>T</variation>
    <location>
        <position position="317"/>
    </location>
</feature>
<feature type="sequence conflict" description="In Ref. 3; CAA36421." evidence="6" ref="3">
    <original>GALFLALVFSI</original>
    <variation>VLCSWLLCSAF</variation>
    <location>
        <begin position="232"/>
        <end position="242"/>
    </location>
</feature>
<gene>
    <name type="primary">MT-CYB</name>
    <name type="synonym">COB</name>
    <name type="synonym">CYTB</name>
    <name type="synonym">MTCYB</name>
</gene>
<keyword id="KW-0002">3D-structure</keyword>
<keyword id="KW-0249">Electron transport</keyword>
<keyword id="KW-0349">Heme</keyword>
<keyword id="KW-0408">Iron</keyword>
<keyword id="KW-0472">Membrane</keyword>
<keyword id="KW-0479">Metal-binding</keyword>
<keyword id="KW-0496">Mitochondrion</keyword>
<keyword id="KW-0999">Mitochondrion inner membrane</keyword>
<keyword id="KW-0679">Respiratory chain</keyword>
<keyword id="KW-0812">Transmembrane</keyword>
<keyword id="KW-1133">Transmembrane helix</keyword>
<keyword id="KW-0813">Transport</keyword>
<keyword id="KW-0830">Ubiquinone</keyword>
<dbReference type="EMBL" id="X66484">
    <property type="protein sequence ID" value="CAA47111.1"/>
    <property type="molecule type" value="Genomic_DNA"/>
</dbReference>
<dbReference type="EMBL" id="X55305">
    <property type="protein sequence ID" value="CAA39011.1"/>
    <property type="molecule type" value="Genomic_DNA"/>
</dbReference>
<dbReference type="EMBL" id="X52168">
    <property type="protein sequence ID" value="CAA36421.1"/>
    <property type="molecule type" value="Genomic_DNA"/>
</dbReference>
<dbReference type="PDB" id="9F5X">
    <property type="method" value="EM"/>
    <property type="resolution" value="2.82 A"/>
    <property type="chains" value="1A/1B=1-381"/>
</dbReference>
<dbReference type="PDB" id="9F5Z">
    <property type="method" value="EM"/>
    <property type="resolution" value="2.39 A"/>
    <property type="chains" value="1A/1B=1-381"/>
</dbReference>
<dbReference type="PDB" id="9F62">
    <property type="method" value="EM"/>
    <property type="resolution" value="5.44 A"/>
    <property type="chains" value="1A/1B/6A/6B=1-381"/>
</dbReference>
<dbReference type="PDBsum" id="9F5X"/>
<dbReference type="PDBsum" id="9F5Z"/>
<dbReference type="PDBsum" id="9F62"/>
<dbReference type="EMDB" id="EMD-50202"/>
<dbReference type="EMDB" id="EMD-50204"/>
<dbReference type="EMDB" id="EMD-50210"/>
<dbReference type="SMR" id="P23662"/>
<dbReference type="PaxDb" id="3055-AAB93440"/>
<dbReference type="eggNOG" id="KOG4663">
    <property type="taxonomic scope" value="Eukaryota"/>
</dbReference>
<dbReference type="GO" id="GO:0005743">
    <property type="term" value="C:mitochondrial inner membrane"/>
    <property type="evidence" value="ECO:0007669"/>
    <property type="project" value="UniProtKB-SubCell"/>
</dbReference>
<dbReference type="GO" id="GO:0045275">
    <property type="term" value="C:respiratory chain complex III"/>
    <property type="evidence" value="ECO:0007669"/>
    <property type="project" value="InterPro"/>
</dbReference>
<dbReference type="GO" id="GO:0046872">
    <property type="term" value="F:metal ion binding"/>
    <property type="evidence" value="ECO:0007669"/>
    <property type="project" value="UniProtKB-KW"/>
</dbReference>
<dbReference type="GO" id="GO:0008121">
    <property type="term" value="F:ubiquinol-cytochrome-c reductase activity"/>
    <property type="evidence" value="ECO:0007669"/>
    <property type="project" value="InterPro"/>
</dbReference>
<dbReference type="GO" id="GO:0022904">
    <property type="term" value="P:respiratory electron transport chain"/>
    <property type="evidence" value="ECO:0007669"/>
    <property type="project" value="InterPro"/>
</dbReference>
<dbReference type="CDD" id="cd00290">
    <property type="entry name" value="cytochrome_b_C"/>
    <property type="match status" value="1"/>
</dbReference>
<dbReference type="CDD" id="cd00284">
    <property type="entry name" value="Cytochrome_b_N"/>
    <property type="match status" value="1"/>
</dbReference>
<dbReference type="Gene3D" id="1.20.810.10">
    <property type="entry name" value="Cytochrome Bc1 Complex, Chain C"/>
    <property type="match status" value="1"/>
</dbReference>
<dbReference type="InterPro" id="IPR005798">
    <property type="entry name" value="Cyt_b/b6_C"/>
</dbReference>
<dbReference type="InterPro" id="IPR036150">
    <property type="entry name" value="Cyt_b/b6_C_sf"/>
</dbReference>
<dbReference type="InterPro" id="IPR005797">
    <property type="entry name" value="Cyt_b/b6_N"/>
</dbReference>
<dbReference type="InterPro" id="IPR027387">
    <property type="entry name" value="Cytb/b6-like_sf"/>
</dbReference>
<dbReference type="InterPro" id="IPR030689">
    <property type="entry name" value="Cytochrome_b"/>
</dbReference>
<dbReference type="InterPro" id="IPR048260">
    <property type="entry name" value="Cytochrome_b_C_euk/bac"/>
</dbReference>
<dbReference type="InterPro" id="IPR048259">
    <property type="entry name" value="Cytochrome_b_N_euk/bac"/>
</dbReference>
<dbReference type="InterPro" id="IPR016174">
    <property type="entry name" value="Di-haem_cyt_TM"/>
</dbReference>
<dbReference type="PANTHER" id="PTHR19271">
    <property type="entry name" value="CYTOCHROME B"/>
    <property type="match status" value="1"/>
</dbReference>
<dbReference type="PANTHER" id="PTHR19271:SF16">
    <property type="entry name" value="CYTOCHROME B"/>
    <property type="match status" value="1"/>
</dbReference>
<dbReference type="Pfam" id="PF00032">
    <property type="entry name" value="Cytochrom_B_C"/>
    <property type="match status" value="1"/>
</dbReference>
<dbReference type="Pfam" id="PF00033">
    <property type="entry name" value="Cytochrome_B"/>
    <property type="match status" value="1"/>
</dbReference>
<dbReference type="PIRSF" id="PIRSF038885">
    <property type="entry name" value="COB"/>
    <property type="match status" value="1"/>
</dbReference>
<dbReference type="SUPFAM" id="SSF81648">
    <property type="entry name" value="a domain/subunit of cytochrome bc1 complex (Ubiquinol-cytochrome c reductase)"/>
    <property type="match status" value="1"/>
</dbReference>
<dbReference type="SUPFAM" id="SSF81342">
    <property type="entry name" value="Transmembrane di-heme cytochromes"/>
    <property type="match status" value="1"/>
</dbReference>
<dbReference type="PROSITE" id="PS51003">
    <property type="entry name" value="CYTB_CTER"/>
    <property type="match status" value="1"/>
</dbReference>
<dbReference type="PROSITE" id="PS51002">
    <property type="entry name" value="CYTB_NTER"/>
    <property type="match status" value="1"/>
</dbReference>
<proteinExistence type="evidence at protein level"/>
<geneLocation type="mitochondrion"/>
<name>CYB_CHLRE</name>
<accession>P23662</accession>
<accession>P23663</accession>
<reference key="1">
    <citation type="journal article" date="1990" name="Mol. Gen. Genet.">
        <title>Mitochondrial DNA of Chlamydomonas reinhardtii: the gene for apocytochrome b and the complete functional map of the 15.8 kb DNA.</title>
        <authorList>
            <person name="Michaelis G."/>
            <person name="Vahrenholz C."/>
            <person name="Pratje E."/>
        </authorList>
    </citation>
    <scope>NUCLEOTIDE SEQUENCE [GENOMIC DNA]</scope>
</reference>
<reference key="2">
    <citation type="journal article" date="1990" name="Mol. Gen. Genet.">
        <title>The apocytochrome b gene of Chlamydomonas smithii contains a mobile intron related to both Saccharomyces and Neurospora introns.</title>
        <authorList>
            <person name="Colleaux L."/>
            <person name="Michel-Wolwertz M.R."/>
            <person name="Matagne R.F."/>
            <person name="Dujon B."/>
        </authorList>
    </citation>
    <scope>NUCLEOTIDE SEQUENCE [GENOMIC DNA]</scope>
    <source>
        <strain>CC-1373</strain>
    </source>
</reference>
<reference key="3">
    <citation type="journal article" date="1990" name="Plant Mol. Biol.">
        <title>The mitochondrial apocytochrome b gene from Chlamydomonas reinhardtii.</title>
        <authorList>
            <person name="Ma D.-P."/>
            <person name="Yang Y.-W."/>
            <person name="King T.Y."/>
            <person name="Hasnain S.E."/>
        </authorList>
    </citation>
    <scope>NUCLEOTIDE SEQUENCE [GENOMIC DNA]</scope>
</reference>
<reference key="4">
    <citation type="journal article" date="1991" name="Curr. Genet.">
        <title>Short dispersed repeats localized in spacer regions of Chlamydomonas reinhardtii mitochondrial DNA.</title>
        <authorList>
            <person name="Boer P.H."/>
            <person name="Gray M.W."/>
        </authorList>
    </citation>
    <scope>NUCLEOTIDE SEQUENCE [GENOMIC DNA]</scope>
    <source>
        <strain>cw15</strain>
    </source>
</reference>
<evidence type="ECO:0000250" key="1"/>
<evidence type="ECO:0000250" key="2">
    <source>
        <dbReference type="UniProtKB" id="P00157"/>
    </source>
</evidence>
<evidence type="ECO:0000250" key="3">
    <source>
        <dbReference type="UniProtKB" id="P00163"/>
    </source>
</evidence>
<evidence type="ECO:0000255" key="4">
    <source>
        <dbReference type="PROSITE-ProRule" id="PRU00967"/>
    </source>
</evidence>
<evidence type="ECO:0000255" key="5">
    <source>
        <dbReference type="PROSITE-ProRule" id="PRU00968"/>
    </source>
</evidence>
<evidence type="ECO:0000305" key="6"/>